<dbReference type="EC" id="2.1.1.191" evidence="1"/>
<dbReference type="EMBL" id="CP000503">
    <property type="protein sequence ID" value="ABM23862.1"/>
    <property type="molecule type" value="Genomic_DNA"/>
</dbReference>
<dbReference type="RefSeq" id="WP_011788387.1">
    <property type="nucleotide sequence ID" value="NC_008750.1"/>
</dbReference>
<dbReference type="SMR" id="A1RGR7"/>
<dbReference type="KEGG" id="shw:Sputw3181_1012"/>
<dbReference type="HOGENOM" id="CLU_014042_0_0_6"/>
<dbReference type="Proteomes" id="UP000002597">
    <property type="component" value="Chromosome"/>
</dbReference>
<dbReference type="GO" id="GO:0005737">
    <property type="term" value="C:cytoplasm"/>
    <property type="evidence" value="ECO:0007669"/>
    <property type="project" value="UniProtKB-SubCell"/>
</dbReference>
<dbReference type="GO" id="GO:0003723">
    <property type="term" value="F:RNA binding"/>
    <property type="evidence" value="ECO:0007669"/>
    <property type="project" value="UniProtKB-KW"/>
</dbReference>
<dbReference type="GO" id="GO:0016434">
    <property type="term" value="F:rRNA (cytosine) methyltransferase activity"/>
    <property type="evidence" value="ECO:0007669"/>
    <property type="project" value="UniProtKB-UniRule"/>
</dbReference>
<dbReference type="CDD" id="cd02440">
    <property type="entry name" value="AdoMet_MTases"/>
    <property type="match status" value="1"/>
</dbReference>
<dbReference type="CDD" id="cd21153">
    <property type="entry name" value="PUA_RlmI"/>
    <property type="match status" value="1"/>
</dbReference>
<dbReference type="CDD" id="cd11572">
    <property type="entry name" value="RlmI_M_like"/>
    <property type="match status" value="1"/>
</dbReference>
<dbReference type="Gene3D" id="2.30.130.10">
    <property type="entry name" value="PUA domain"/>
    <property type="match status" value="1"/>
</dbReference>
<dbReference type="Gene3D" id="3.30.750.80">
    <property type="entry name" value="RNA methyltransferase domain (HRMD) like"/>
    <property type="match status" value="1"/>
</dbReference>
<dbReference type="Gene3D" id="3.40.50.150">
    <property type="entry name" value="Vaccinia Virus protein VP39"/>
    <property type="match status" value="1"/>
</dbReference>
<dbReference type="HAMAP" id="MF_01857">
    <property type="entry name" value="23SrRNA_methyltr_I"/>
    <property type="match status" value="1"/>
</dbReference>
<dbReference type="InterPro" id="IPR002478">
    <property type="entry name" value="PUA"/>
</dbReference>
<dbReference type="InterPro" id="IPR015947">
    <property type="entry name" value="PUA-like_sf"/>
</dbReference>
<dbReference type="InterPro" id="IPR036974">
    <property type="entry name" value="PUA_sf"/>
</dbReference>
<dbReference type="InterPro" id="IPR023542">
    <property type="entry name" value="RLMI"/>
</dbReference>
<dbReference type="InterPro" id="IPR041532">
    <property type="entry name" value="RlmI-like_PUA"/>
</dbReference>
<dbReference type="InterPro" id="IPR019614">
    <property type="entry name" value="SAM-dep_methyl-trfase"/>
</dbReference>
<dbReference type="InterPro" id="IPR029063">
    <property type="entry name" value="SAM-dependent_MTases_sf"/>
</dbReference>
<dbReference type="PANTHER" id="PTHR42873">
    <property type="entry name" value="RIBOSOMAL RNA LARGE SUBUNIT METHYLTRANSFERASE"/>
    <property type="match status" value="1"/>
</dbReference>
<dbReference type="PANTHER" id="PTHR42873:SF1">
    <property type="entry name" value="S-ADENOSYLMETHIONINE-DEPENDENT METHYLTRANSFERASE DOMAIN-CONTAINING PROTEIN"/>
    <property type="match status" value="1"/>
</dbReference>
<dbReference type="Pfam" id="PF10672">
    <property type="entry name" value="Methyltrans_SAM"/>
    <property type="match status" value="1"/>
</dbReference>
<dbReference type="Pfam" id="PF17785">
    <property type="entry name" value="PUA_3"/>
    <property type="match status" value="1"/>
</dbReference>
<dbReference type="SMART" id="SM00359">
    <property type="entry name" value="PUA"/>
    <property type="match status" value="1"/>
</dbReference>
<dbReference type="SUPFAM" id="SSF88697">
    <property type="entry name" value="PUA domain-like"/>
    <property type="match status" value="1"/>
</dbReference>
<dbReference type="SUPFAM" id="SSF53335">
    <property type="entry name" value="S-adenosyl-L-methionine-dependent methyltransferases"/>
    <property type="match status" value="1"/>
</dbReference>
<dbReference type="PROSITE" id="PS50890">
    <property type="entry name" value="PUA"/>
    <property type="match status" value="1"/>
</dbReference>
<protein>
    <recommendedName>
        <fullName evidence="1">Ribosomal RNA large subunit methyltransferase I</fullName>
        <ecNumber evidence="1">2.1.1.191</ecNumber>
    </recommendedName>
    <alternativeName>
        <fullName evidence="1">23S rRNA m5C1962 methyltransferase</fullName>
    </alternativeName>
    <alternativeName>
        <fullName evidence="1">rRNA (cytosine-C(5)-)-methyltransferase RlmI</fullName>
    </alternativeName>
</protein>
<comment type="function">
    <text evidence="1">Specifically methylates the cytosine at position 1962 (m5C1962) of 23S rRNA.</text>
</comment>
<comment type="catalytic activity">
    <reaction evidence="1">
        <text>cytidine(1962) in 23S rRNA + S-adenosyl-L-methionine = 5-methylcytidine(1962) in 23S rRNA + S-adenosyl-L-homocysteine + H(+)</text>
        <dbReference type="Rhea" id="RHEA:42912"/>
        <dbReference type="Rhea" id="RHEA-COMP:10382"/>
        <dbReference type="Rhea" id="RHEA-COMP:10386"/>
        <dbReference type="ChEBI" id="CHEBI:15378"/>
        <dbReference type="ChEBI" id="CHEBI:57856"/>
        <dbReference type="ChEBI" id="CHEBI:59789"/>
        <dbReference type="ChEBI" id="CHEBI:74483"/>
        <dbReference type="ChEBI" id="CHEBI:82748"/>
        <dbReference type="EC" id="2.1.1.191"/>
    </reaction>
</comment>
<comment type="subcellular location">
    <subcellularLocation>
        <location evidence="1">Cytoplasm</location>
    </subcellularLocation>
</comment>
<comment type="similarity">
    <text evidence="1">Belongs to the methyltransferase superfamily. RlmI family.</text>
</comment>
<feature type="chain" id="PRO_0000366265" description="Ribosomal RNA large subunit methyltransferase I">
    <location>
        <begin position="1"/>
        <end position="396"/>
    </location>
</feature>
<feature type="domain" description="PUA" evidence="1">
    <location>
        <begin position="2"/>
        <end position="79"/>
    </location>
</feature>
<evidence type="ECO:0000255" key="1">
    <source>
        <dbReference type="HAMAP-Rule" id="MF_01857"/>
    </source>
</evidence>
<sequence length="396" mass="44100">MAIRIKLKPGREKSLERRHPWVFSNAIHNIKGKPEAGETVDVVAHDGHWLGRGAWSPESQIQVRIWTFDREEEIDRAFFARRLQRAQIGRNDLIREQGLTGYRLVAAESDGLPGITIDRYANVLVCQLLSTGADLWRDTLVELLAEQYPDCAIYERSDVDSRKKEGLLPVTGLLHGTLPEMPVIIEENGIKIAVDVIKGHKTGFYLDQRDNRAIAARFVKDKSVLNCFCYTGTFGLYAAKAGAASIENVDVSSLALATARLNMQVNGLSDDNVHYNEADVFKLLRQYRDEGKTFDVIVLDPPKFADNKAQLNGACRGYKDINMIALQLLNPGGVLLTFSCSGLMPADLFQKIVADAALDAKREIQFIERLSQASDHPIGSAFPEGFYLKGLVARAW</sequence>
<organism>
    <name type="scientific">Shewanella sp. (strain W3-18-1)</name>
    <dbReference type="NCBI Taxonomy" id="351745"/>
    <lineage>
        <taxon>Bacteria</taxon>
        <taxon>Pseudomonadati</taxon>
        <taxon>Pseudomonadota</taxon>
        <taxon>Gammaproteobacteria</taxon>
        <taxon>Alteromonadales</taxon>
        <taxon>Shewanellaceae</taxon>
        <taxon>Shewanella</taxon>
    </lineage>
</organism>
<reference key="1">
    <citation type="submission" date="2006-12" db="EMBL/GenBank/DDBJ databases">
        <title>Complete sequence of Shewanella sp. W3-18-1.</title>
        <authorList>
            <consortium name="US DOE Joint Genome Institute"/>
            <person name="Copeland A."/>
            <person name="Lucas S."/>
            <person name="Lapidus A."/>
            <person name="Barry K."/>
            <person name="Detter J.C."/>
            <person name="Glavina del Rio T."/>
            <person name="Hammon N."/>
            <person name="Israni S."/>
            <person name="Dalin E."/>
            <person name="Tice H."/>
            <person name="Pitluck S."/>
            <person name="Chain P."/>
            <person name="Malfatti S."/>
            <person name="Shin M."/>
            <person name="Vergez L."/>
            <person name="Schmutz J."/>
            <person name="Larimer F."/>
            <person name="Land M."/>
            <person name="Hauser L."/>
            <person name="Kyrpides N."/>
            <person name="Lykidis A."/>
            <person name="Tiedje J."/>
            <person name="Richardson P."/>
        </authorList>
    </citation>
    <scope>NUCLEOTIDE SEQUENCE [LARGE SCALE GENOMIC DNA]</scope>
    <source>
        <strain>W3-18-1</strain>
    </source>
</reference>
<proteinExistence type="inferred from homology"/>
<accession>A1RGR7</accession>
<gene>
    <name evidence="1" type="primary">rlmI</name>
    <name type="ordered locus">Sputw3181_1012</name>
</gene>
<name>RLMI_SHESW</name>
<keyword id="KW-0963">Cytoplasm</keyword>
<keyword id="KW-0489">Methyltransferase</keyword>
<keyword id="KW-0694">RNA-binding</keyword>
<keyword id="KW-0698">rRNA processing</keyword>
<keyword id="KW-0949">S-adenosyl-L-methionine</keyword>
<keyword id="KW-0808">Transferase</keyword>